<name>YP85_AZOBR</name>
<proteinExistence type="inferred from homology"/>
<reference key="1">
    <citation type="journal article" date="2004" name="FEMS Microbiol. Lett.">
        <title>Annotation of the pRhico plasmid of Azospirillum brasilense reveals its role in determining the outer surface composition.</title>
        <authorList>
            <person name="Vanbleu E."/>
            <person name="Marchal K."/>
            <person name="Lambrecht M."/>
            <person name="Mathys J."/>
            <person name="Vanderleyden J."/>
        </authorList>
    </citation>
    <scope>NUCLEOTIDE SEQUENCE [GENOMIC DNA]</scope>
    <source>
        <strain>ATCC 29145 / DSM 1690 / IMET 11303 / Sp7</strain>
    </source>
</reference>
<accession>Q6QW47</accession>
<sequence length="82" mass="9564">MSDVGEIAADRLKSFVERIERLEEEKSGLQEDIKEVYSEAKGTGFDVKIIRQIIRLRKMDKADRQEQRAILEMYEEALGMTE</sequence>
<organism>
    <name type="scientific">Azospirillum brasilense</name>
    <dbReference type="NCBI Taxonomy" id="192"/>
    <lineage>
        <taxon>Bacteria</taxon>
        <taxon>Pseudomonadati</taxon>
        <taxon>Pseudomonadota</taxon>
        <taxon>Alphaproteobacteria</taxon>
        <taxon>Rhodospirillales</taxon>
        <taxon>Azospirillaceae</taxon>
        <taxon>Azospirillum</taxon>
    </lineage>
</organism>
<comment type="similarity">
    <text evidence="1">Belongs to the UPF0335 family.</text>
</comment>
<feature type="chain" id="PRO_0000219920" description="UPF0335 protein pRhico085">
    <location>
        <begin position="1"/>
        <end position="82"/>
    </location>
</feature>
<protein>
    <recommendedName>
        <fullName>UPF0335 protein pRhico085</fullName>
    </recommendedName>
</protein>
<dbReference type="EMBL" id="AY523974">
    <property type="protein sequence ID" value="AAS83073.1"/>
    <property type="molecule type" value="Genomic_DNA"/>
</dbReference>
<dbReference type="RefSeq" id="WP_015989315.1">
    <property type="nucleotide sequence ID" value="NZ_CP032342.1"/>
</dbReference>
<dbReference type="SMR" id="Q6QW47"/>
<dbReference type="GeneID" id="56447897"/>
<dbReference type="GO" id="GO:0003677">
    <property type="term" value="F:DNA binding"/>
    <property type="evidence" value="ECO:0007669"/>
    <property type="project" value="InterPro"/>
</dbReference>
<dbReference type="HAMAP" id="MF_00797">
    <property type="entry name" value="UPF0335"/>
    <property type="match status" value="1"/>
</dbReference>
<dbReference type="InterPro" id="IPR018753">
    <property type="entry name" value="GapR-like"/>
</dbReference>
<dbReference type="InterPro" id="IPR046367">
    <property type="entry name" value="GapR-like_DNA-bd"/>
</dbReference>
<dbReference type="NCBIfam" id="NF010247">
    <property type="entry name" value="PRK13694.1"/>
    <property type="match status" value="1"/>
</dbReference>
<dbReference type="Pfam" id="PF10073">
    <property type="entry name" value="GapR_DNA-bd"/>
    <property type="match status" value="1"/>
</dbReference>
<gene>
    <name type="ORF">pRhico085</name>
</gene>
<evidence type="ECO:0000305" key="1"/>
<geneLocation type="plasmid">
    <name>pRhico</name>
    <name>90-MDa megaplasmid</name>
</geneLocation>
<keyword id="KW-0614">Plasmid</keyword>